<name>BRE1_KLULA</name>
<gene>
    <name type="primary">BRE1</name>
    <name type="ordered locus">KLLA0B02981g</name>
</gene>
<proteinExistence type="evidence at protein level"/>
<evidence type="ECO:0000250" key="1">
    <source>
        <dbReference type="UniProtKB" id="Q07457"/>
    </source>
</evidence>
<evidence type="ECO:0000255" key="2"/>
<evidence type="ECO:0000255" key="3">
    <source>
        <dbReference type="PROSITE-ProRule" id="PRU00175"/>
    </source>
</evidence>
<evidence type="ECO:0000256" key="4">
    <source>
        <dbReference type="SAM" id="MobiDB-lite"/>
    </source>
</evidence>
<evidence type="ECO:0000305" key="5"/>
<evidence type="ECO:0007829" key="6">
    <source>
        <dbReference type="PDB" id="7W76"/>
    </source>
</evidence>
<protein>
    <recommendedName>
        <fullName>E3 ubiquitin-protein ligase BRE1</fullName>
        <ecNumber evidence="1">2.3.2.27</ecNumber>
    </recommendedName>
    <alternativeName>
        <fullName evidence="5">RING-type E3 ubiquitin transferase BRE1</fullName>
    </alternativeName>
</protein>
<dbReference type="EC" id="2.3.2.27" evidence="1"/>
<dbReference type="EMBL" id="CR382122">
    <property type="protein sequence ID" value="CAH02058.1"/>
    <property type="molecule type" value="Genomic_DNA"/>
</dbReference>
<dbReference type="RefSeq" id="XP_451665.1">
    <property type="nucleotide sequence ID" value="XM_451665.1"/>
</dbReference>
<dbReference type="PDB" id="7W75">
    <property type="method" value="X-ray"/>
    <property type="resolution" value="3.20 A"/>
    <property type="chains" value="C/D/E/F=1-206"/>
</dbReference>
<dbReference type="PDB" id="7W76">
    <property type="method" value="X-ray"/>
    <property type="resolution" value="3.05 A"/>
    <property type="chains" value="C/D/E/F=1-206"/>
</dbReference>
<dbReference type="PDBsum" id="7W75"/>
<dbReference type="PDBsum" id="7W76"/>
<dbReference type="SMR" id="Q6CWM4"/>
<dbReference type="FunCoup" id="Q6CWM4">
    <property type="interactions" value="994"/>
</dbReference>
<dbReference type="STRING" id="284590.Q6CWM4"/>
<dbReference type="PaxDb" id="284590-Q6CWM4"/>
<dbReference type="KEGG" id="kla:KLLA0_B02981g"/>
<dbReference type="eggNOG" id="KOG0978">
    <property type="taxonomic scope" value="Eukaryota"/>
</dbReference>
<dbReference type="HOGENOM" id="CLU_019713_1_0_1"/>
<dbReference type="InParanoid" id="Q6CWM4"/>
<dbReference type="OMA" id="YRQMQEY"/>
<dbReference type="UniPathway" id="UPA00143"/>
<dbReference type="Proteomes" id="UP000000598">
    <property type="component" value="Chromosome B"/>
</dbReference>
<dbReference type="GO" id="GO:0033503">
    <property type="term" value="C:HULC complex"/>
    <property type="evidence" value="ECO:0007669"/>
    <property type="project" value="TreeGrafter"/>
</dbReference>
<dbReference type="GO" id="GO:0005634">
    <property type="term" value="C:nucleus"/>
    <property type="evidence" value="ECO:0007669"/>
    <property type="project" value="UniProtKB-SubCell"/>
</dbReference>
<dbReference type="GO" id="GO:0061630">
    <property type="term" value="F:ubiquitin protein ligase activity"/>
    <property type="evidence" value="ECO:0007669"/>
    <property type="project" value="TreeGrafter"/>
</dbReference>
<dbReference type="GO" id="GO:0008270">
    <property type="term" value="F:zinc ion binding"/>
    <property type="evidence" value="ECO:0007669"/>
    <property type="project" value="UniProtKB-KW"/>
</dbReference>
<dbReference type="GO" id="GO:0006325">
    <property type="term" value="P:chromatin organization"/>
    <property type="evidence" value="ECO:0007669"/>
    <property type="project" value="UniProtKB-KW"/>
</dbReference>
<dbReference type="GO" id="GO:0016567">
    <property type="term" value="P:protein ubiquitination"/>
    <property type="evidence" value="ECO:0007669"/>
    <property type="project" value="UniProtKB-UniPathway"/>
</dbReference>
<dbReference type="CDD" id="cd16499">
    <property type="entry name" value="RING-HC_Bre1-like"/>
    <property type="match status" value="1"/>
</dbReference>
<dbReference type="FunFam" id="3.30.40.10:FF:000414">
    <property type="entry name" value="E3 ubiquitin protein ligase"/>
    <property type="match status" value="1"/>
</dbReference>
<dbReference type="Gene3D" id="3.30.40.10">
    <property type="entry name" value="Zinc/RING finger domain, C3HC4 (zinc finger)"/>
    <property type="match status" value="1"/>
</dbReference>
<dbReference type="InterPro" id="IPR013956">
    <property type="entry name" value="E3_ubiquit_lig_Bre1"/>
</dbReference>
<dbReference type="InterPro" id="IPR018957">
    <property type="entry name" value="Znf_C3HC4_RING-type"/>
</dbReference>
<dbReference type="InterPro" id="IPR001841">
    <property type="entry name" value="Znf_RING"/>
</dbReference>
<dbReference type="InterPro" id="IPR013083">
    <property type="entry name" value="Znf_RING/FYVE/PHD"/>
</dbReference>
<dbReference type="PANTHER" id="PTHR23163:SF0">
    <property type="entry name" value="E3 UBIQUITIN-PROTEIN LIGASE BRE1"/>
    <property type="match status" value="1"/>
</dbReference>
<dbReference type="PANTHER" id="PTHR23163">
    <property type="entry name" value="RING FINGER PROTEIN-RELATED"/>
    <property type="match status" value="1"/>
</dbReference>
<dbReference type="Pfam" id="PF08647">
    <property type="entry name" value="BRE1"/>
    <property type="match status" value="1"/>
</dbReference>
<dbReference type="Pfam" id="PF00097">
    <property type="entry name" value="zf-C3HC4"/>
    <property type="match status" value="1"/>
</dbReference>
<dbReference type="SMART" id="SM00184">
    <property type="entry name" value="RING"/>
    <property type="match status" value="1"/>
</dbReference>
<dbReference type="SUPFAM" id="SSF57850">
    <property type="entry name" value="RING/U-box"/>
    <property type="match status" value="1"/>
</dbReference>
<dbReference type="PROSITE" id="PS50089">
    <property type="entry name" value="ZF_RING_2"/>
    <property type="match status" value="1"/>
</dbReference>
<keyword id="KW-0002">3D-structure</keyword>
<keyword id="KW-0156">Chromatin regulator</keyword>
<keyword id="KW-0175">Coiled coil</keyword>
<keyword id="KW-0479">Metal-binding</keyword>
<keyword id="KW-0539">Nucleus</keyword>
<keyword id="KW-1185">Reference proteome</keyword>
<keyword id="KW-0808">Transferase</keyword>
<keyword id="KW-0833">Ubl conjugation pathway</keyword>
<keyword id="KW-0862">Zinc</keyword>
<keyword id="KW-0863">Zinc-finger</keyword>
<comment type="function">
    <text evidence="1">E3 ubiquitin-protein ligase that mediates monoubiquitination of histone H2B to form H2BK123ub1. H2BK123ub1 gives a specific tag for epigenetic transcriptional activation and is also a prerequisite for H3K4me and H3K79me formation.</text>
</comment>
<comment type="catalytic activity">
    <reaction evidence="1">
        <text>S-ubiquitinyl-[E2 ubiquitin-conjugating enzyme]-L-cysteine + [acceptor protein]-L-lysine = [E2 ubiquitin-conjugating enzyme]-L-cysteine + N(6)-ubiquitinyl-[acceptor protein]-L-lysine.</text>
        <dbReference type="EC" id="2.3.2.27"/>
    </reaction>
</comment>
<comment type="pathway">
    <text>Protein modification; protein ubiquitination.</text>
</comment>
<comment type="subcellular location">
    <subcellularLocation>
        <location evidence="1">Nucleus</location>
    </subcellularLocation>
</comment>
<comment type="similarity">
    <text evidence="5">Belongs to the BRE1 family.</text>
</comment>
<accession>Q6CWM4</accession>
<feature type="chain" id="PRO_0000055853" description="E3 ubiquitin-protein ligase BRE1">
    <location>
        <begin position="1"/>
        <end position="663"/>
    </location>
</feature>
<feature type="zinc finger region" description="RING-type" evidence="3">
    <location>
        <begin position="611"/>
        <end position="650"/>
    </location>
</feature>
<feature type="region of interest" description="Disordered" evidence="4">
    <location>
        <begin position="176"/>
        <end position="225"/>
    </location>
</feature>
<feature type="region of interest" description="Disordered" evidence="4">
    <location>
        <begin position="273"/>
        <end position="293"/>
    </location>
</feature>
<feature type="coiled-coil region" evidence="2">
    <location>
        <begin position="133"/>
        <end position="172"/>
    </location>
</feature>
<feature type="coiled-coil region" evidence="2">
    <location>
        <begin position="225"/>
        <end position="424"/>
    </location>
</feature>
<feature type="coiled-coil region" evidence="2">
    <location>
        <begin position="463"/>
        <end position="588"/>
    </location>
</feature>
<feature type="compositionally biased region" description="Low complexity" evidence="4">
    <location>
        <begin position="273"/>
        <end position="285"/>
    </location>
</feature>
<feature type="strand" evidence="6">
    <location>
        <begin position="16"/>
        <end position="18"/>
    </location>
</feature>
<feature type="helix" evidence="6">
    <location>
        <begin position="22"/>
        <end position="64"/>
    </location>
</feature>
<feature type="helix" evidence="6">
    <location>
        <begin position="66"/>
        <end position="80"/>
    </location>
</feature>
<feature type="helix" evidence="6">
    <location>
        <begin position="86"/>
        <end position="96"/>
    </location>
</feature>
<feature type="helix" evidence="6">
    <location>
        <begin position="101"/>
        <end position="110"/>
    </location>
</feature>
<feature type="helix" evidence="6">
    <location>
        <begin position="112"/>
        <end position="120"/>
    </location>
</feature>
<feature type="helix" evidence="6">
    <location>
        <begin position="129"/>
        <end position="170"/>
    </location>
</feature>
<feature type="helix" evidence="6">
    <location>
        <begin position="175"/>
        <end position="181"/>
    </location>
</feature>
<sequence>MNDHFVKRPKLELSDPSEPLTQKDVIAFQKEALFRCLNKWRVKANQLVEENEVLAAGLSKTTESVSGCCSSIVVLARSVVEDCSDEQDKRFLQQLINTEDEHTLTQIISNNSARICELILKTSGSNISDNIGRLQELESLTLTLQKLLKSSENKLKKATEYYENIIAQYDRQDSESVSRVFNTADDDSNVKKEKQSSTGASSVNDESNDNSDKSQSNKESAVSQAHHEIEINDLNTQISVLEATVKELTEWKNQNERELSELRQTVASNKSALSNNQLQSNSQHQPDASVTNEKISSLTKQNEQLQQINEGYLTKFQQLSADREIFNNKLTSEFNLAQETLKKHNASLEKDLVRIRTIRDELLAKVSLLEAQKTKSEMLEDLEKSLNIQQEQLQKFESRSSENASQDALMKELQDLEKAFREVSHLSNKKYAAYLNQESVLSKLTVEKTKASEKYFAAMRSKDAIMIENKNLSKNLNKSNELIVQLKDLEKTLQQKIVNVHMQLSLSQENEKRVKESNKETSMKIVELTSENNKLKKSTERLESETRNLIGTKTELESKIKDKDIENKQLKIKVSSAEAKSKKLYKTLLSNGGDNGALAEELENFRTIIYCSLCSKNWKNTALKTCGHVFCDVCCKERLAARMRKCPTCNKPFSSNDLLSIHL</sequence>
<organism>
    <name type="scientific">Kluyveromyces lactis (strain ATCC 8585 / CBS 2359 / DSM 70799 / NBRC 1267 / NRRL Y-1140 / WM37)</name>
    <name type="common">Yeast</name>
    <name type="synonym">Candida sphaerica</name>
    <dbReference type="NCBI Taxonomy" id="284590"/>
    <lineage>
        <taxon>Eukaryota</taxon>
        <taxon>Fungi</taxon>
        <taxon>Dikarya</taxon>
        <taxon>Ascomycota</taxon>
        <taxon>Saccharomycotina</taxon>
        <taxon>Saccharomycetes</taxon>
        <taxon>Saccharomycetales</taxon>
        <taxon>Saccharomycetaceae</taxon>
        <taxon>Kluyveromyces</taxon>
    </lineage>
</organism>
<reference key="1">
    <citation type="journal article" date="2004" name="Nature">
        <title>Genome evolution in yeasts.</title>
        <authorList>
            <person name="Dujon B."/>
            <person name="Sherman D."/>
            <person name="Fischer G."/>
            <person name="Durrens P."/>
            <person name="Casaregola S."/>
            <person name="Lafontaine I."/>
            <person name="de Montigny J."/>
            <person name="Marck C."/>
            <person name="Neuveglise C."/>
            <person name="Talla E."/>
            <person name="Goffard N."/>
            <person name="Frangeul L."/>
            <person name="Aigle M."/>
            <person name="Anthouard V."/>
            <person name="Babour A."/>
            <person name="Barbe V."/>
            <person name="Barnay S."/>
            <person name="Blanchin S."/>
            <person name="Beckerich J.-M."/>
            <person name="Beyne E."/>
            <person name="Bleykasten C."/>
            <person name="Boisrame A."/>
            <person name="Boyer J."/>
            <person name="Cattolico L."/>
            <person name="Confanioleri F."/>
            <person name="de Daruvar A."/>
            <person name="Despons L."/>
            <person name="Fabre E."/>
            <person name="Fairhead C."/>
            <person name="Ferry-Dumazet H."/>
            <person name="Groppi A."/>
            <person name="Hantraye F."/>
            <person name="Hennequin C."/>
            <person name="Jauniaux N."/>
            <person name="Joyet P."/>
            <person name="Kachouri R."/>
            <person name="Kerrest A."/>
            <person name="Koszul R."/>
            <person name="Lemaire M."/>
            <person name="Lesur I."/>
            <person name="Ma L."/>
            <person name="Muller H."/>
            <person name="Nicaud J.-M."/>
            <person name="Nikolski M."/>
            <person name="Oztas S."/>
            <person name="Ozier-Kalogeropoulos O."/>
            <person name="Pellenz S."/>
            <person name="Potier S."/>
            <person name="Richard G.-F."/>
            <person name="Straub M.-L."/>
            <person name="Suleau A."/>
            <person name="Swennen D."/>
            <person name="Tekaia F."/>
            <person name="Wesolowski-Louvel M."/>
            <person name="Westhof E."/>
            <person name="Wirth B."/>
            <person name="Zeniou-Meyer M."/>
            <person name="Zivanovic Y."/>
            <person name="Bolotin-Fukuhara M."/>
            <person name="Thierry A."/>
            <person name="Bouchier C."/>
            <person name="Caudron B."/>
            <person name="Scarpelli C."/>
            <person name="Gaillardin C."/>
            <person name="Weissenbach J."/>
            <person name="Wincker P."/>
            <person name="Souciet J.-L."/>
        </authorList>
    </citation>
    <scope>NUCLEOTIDE SEQUENCE [LARGE SCALE GENOMIC DNA]</scope>
    <source>
        <strain>ATCC 8585 / CBS 2359 / DSM 70799 / NBRC 1267 / NRRL Y-1140 / WM37</strain>
    </source>
</reference>